<proteinExistence type="inferred from homology"/>
<reference key="1">
    <citation type="journal article" date="2009" name="J. Bacteriol.">
        <title>Role of conjugative elements in the evolution of the multidrug-resistant pandemic clone Streptococcus pneumoniae Spain23F ST81.</title>
        <authorList>
            <person name="Croucher N.J."/>
            <person name="Walker D."/>
            <person name="Romero P."/>
            <person name="Lennard N."/>
            <person name="Paterson G.K."/>
            <person name="Bason N.C."/>
            <person name="Mitchell A.M."/>
            <person name="Quail M.A."/>
            <person name="Andrew P.W."/>
            <person name="Parkhill J."/>
            <person name="Bentley S.D."/>
            <person name="Mitchell T.J."/>
        </authorList>
    </citation>
    <scope>NUCLEOTIDE SEQUENCE [LARGE SCALE GENOMIC DNA]</scope>
    <source>
        <strain>ATCC 700669 / Spain 23F-1</strain>
    </source>
</reference>
<sequence>MKREILLERIDKLKQLMPWYVLEYYQSKLAVPYSFTTLYEYLKEYDRFFSWVLESGISNADKISDIPLSVLENMSKKDMESFILYLRERPLLNANTTKQGVSQTTINRTLSALSSLYKYLTEEVENDQGEPYFYRNVMKKVSTKKKKETLAARAENIKQKLFLGDETEGFLTYIDQEHPQQLSNRALSSFNKNKERDLAIIALLLASGVRLSEAVNLDLRDLNLKMMVIDVTRKGGKRDSVNVAAFAKPYLENYLAIRNQRYKTEKTDTALFLTLYRGVPNRIDASSVEKMVAKYSEDFKVRVTPHKLRHTLATRLYDATKSQVLVSHQLGHASTQVTDLYTHIVSDEQKNALDSL</sequence>
<protein>
    <recommendedName>
        <fullName evidence="1">Tyrosine recombinase XerS</fullName>
    </recommendedName>
</protein>
<organism>
    <name type="scientific">Streptococcus pneumoniae (strain ATCC 700669 / Spain 23F-1)</name>
    <dbReference type="NCBI Taxonomy" id="561276"/>
    <lineage>
        <taxon>Bacteria</taxon>
        <taxon>Bacillati</taxon>
        <taxon>Bacillota</taxon>
        <taxon>Bacilli</taxon>
        <taxon>Lactobacillales</taxon>
        <taxon>Streptococcaceae</taxon>
        <taxon>Streptococcus</taxon>
    </lineage>
</organism>
<name>XERS_STRPJ</name>
<evidence type="ECO:0000255" key="1">
    <source>
        <dbReference type="HAMAP-Rule" id="MF_01816"/>
    </source>
</evidence>
<evidence type="ECO:0000255" key="2">
    <source>
        <dbReference type="PROSITE-ProRule" id="PRU01246"/>
    </source>
</evidence>
<evidence type="ECO:0000255" key="3">
    <source>
        <dbReference type="PROSITE-ProRule" id="PRU01248"/>
    </source>
</evidence>
<dbReference type="EMBL" id="FM211187">
    <property type="protein sequence ID" value="CAR68878.1"/>
    <property type="molecule type" value="Genomic_DNA"/>
</dbReference>
<dbReference type="RefSeq" id="WP_000817884.1">
    <property type="nucleotide sequence ID" value="NC_011900.1"/>
</dbReference>
<dbReference type="SMR" id="B8ZQ39"/>
<dbReference type="KEGG" id="sne:SPN23F10630"/>
<dbReference type="HOGENOM" id="CLU_027562_9_6_9"/>
<dbReference type="GO" id="GO:0005737">
    <property type="term" value="C:cytoplasm"/>
    <property type="evidence" value="ECO:0007669"/>
    <property type="project" value="UniProtKB-SubCell"/>
</dbReference>
<dbReference type="GO" id="GO:0003677">
    <property type="term" value="F:DNA binding"/>
    <property type="evidence" value="ECO:0007669"/>
    <property type="project" value="UniProtKB-KW"/>
</dbReference>
<dbReference type="GO" id="GO:0009037">
    <property type="term" value="F:tyrosine-based site-specific recombinase activity"/>
    <property type="evidence" value="ECO:0007669"/>
    <property type="project" value="UniProtKB-UniRule"/>
</dbReference>
<dbReference type="GO" id="GO:0051301">
    <property type="term" value="P:cell division"/>
    <property type="evidence" value="ECO:0007669"/>
    <property type="project" value="UniProtKB-KW"/>
</dbReference>
<dbReference type="GO" id="GO:0007059">
    <property type="term" value="P:chromosome segregation"/>
    <property type="evidence" value="ECO:0007669"/>
    <property type="project" value="UniProtKB-UniRule"/>
</dbReference>
<dbReference type="GO" id="GO:0006310">
    <property type="term" value="P:DNA recombination"/>
    <property type="evidence" value="ECO:0007669"/>
    <property type="project" value="UniProtKB-UniRule"/>
</dbReference>
<dbReference type="Gene3D" id="1.10.150.130">
    <property type="match status" value="1"/>
</dbReference>
<dbReference type="Gene3D" id="1.10.443.10">
    <property type="entry name" value="Intergrase catalytic core"/>
    <property type="match status" value="1"/>
</dbReference>
<dbReference type="HAMAP" id="MF_01816">
    <property type="entry name" value="Recomb_XerS"/>
    <property type="match status" value="1"/>
</dbReference>
<dbReference type="InterPro" id="IPR044068">
    <property type="entry name" value="CB"/>
</dbReference>
<dbReference type="InterPro" id="IPR011010">
    <property type="entry name" value="DNA_brk_join_enz"/>
</dbReference>
<dbReference type="InterPro" id="IPR013762">
    <property type="entry name" value="Integrase-like_cat_sf"/>
</dbReference>
<dbReference type="InterPro" id="IPR002104">
    <property type="entry name" value="Integrase_catalytic"/>
</dbReference>
<dbReference type="InterPro" id="IPR010998">
    <property type="entry name" value="Integrase_recombinase_N"/>
</dbReference>
<dbReference type="InterPro" id="IPR004107">
    <property type="entry name" value="Integrase_SAM-like_N"/>
</dbReference>
<dbReference type="InterPro" id="IPR023670">
    <property type="entry name" value="Recomb_XerS"/>
</dbReference>
<dbReference type="InterPro" id="IPR050090">
    <property type="entry name" value="Tyrosine_recombinase_XerCD"/>
</dbReference>
<dbReference type="NCBIfam" id="NF003462">
    <property type="entry name" value="PRK05084.1"/>
    <property type="match status" value="1"/>
</dbReference>
<dbReference type="PANTHER" id="PTHR30349">
    <property type="entry name" value="PHAGE INTEGRASE-RELATED"/>
    <property type="match status" value="1"/>
</dbReference>
<dbReference type="PANTHER" id="PTHR30349:SF77">
    <property type="entry name" value="TYROSINE RECOMBINASE XERC"/>
    <property type="match status" value="1"/>
</dbReference>
<dbReference type="Pfam" id="PF02899">
    <property type="entry name" value="Phage_int_SAM_1"/>
    <property type="match status" value="1"/>
</dbReference>
<dbReference type="Pfam" id="PF00589">
    <property type="entry name" value="Phage_integrase"/>
    <property type="match status" value="1"/>
</dbReference>
<dbReference type="SUPFAM" id="SSF56349">
    <property type="entry name" value="DNA breaking-rejoining enzymes"/>
    <property type="match status" value="1"/>
</dbReference>
<dbReference type="PROSITE" id="PS51900">
    <property type="entry name" value="CB"/>
    <property type="match status" value="1"/>
</dbReference>
<dbReference type="PROSITE" id="PS51898">
    <property type="entry name" value="TYR_RECOMBINASE"/>
    <property type="match status" value="1"/>
</dbReference>
<feature type="chain" id="PRO_1000187915" description="Tyrosine recombinase XerS">
    <location>
        <begin position="1"/>
        <end position="356"/>
    </location>
</feature>
<feature type="domain" description="Core-binding (CB)" evidence="3">
    <location>
        <begin position="16"/>
        <end position="121"/>
    </location>
</feature>
<feature type="domain" description="Tyr recombinase" evidence="2">
    <location>
        <begin position="169"/>
        <end position="354"/>
    </location>
</feature>
<feature type="active site" evidence="1">
    <location>
        <position position="210"/>
    </location>
</feature>
<feature type="active site" evidence="1">
    <location>
        <position position="234"/>
    </location>
</feature>
<feature type="active site" evidence="1">
    <location>
        <position position="306"/>
    </location>
</feature>
<feature type="active site" evidence="1">
    <location>
        <position position="309"/>
    </location>
</feature>
<feature type="active site" evidence="1">
    <location>
        <position position="332"/>
    </location>
</feature>
<feature type="active site" description="O-(3'-phospho-DNA)-tyrosine intermediate" evidence="1">
    <location>
        <position position="341"/>
    </location>
</feature>
<comment type="function">
    <text evidence="1">Site-specific tyrosine recombinase, which acts by catalyzing the cutting and rejoining of the recombining DNA molecules. Essential to convert dimers of the bacterial chromosome into monomers to permit their segregation at cell division.</text>
</comment>
<comment type="activity regulation">
    <text evidence="1">FtsK is required for recombination.</text>
</comment>
<comment type="subcellular location">
    <subcellularLocation>
        <location evidence="1">Cytoplasm</location>
    </subcellularLocation>
</comment>
<comment type="similarity">
    <text evidence="1">Belongs to the 'phage' integrase family. XerS subfamily.</text>
</comment>
<gene>
    <name evidence="1" type="primary">xerS</name>
    <name type="ordered locus">SPN23F10630</name>
</gene>
<keyword id="KW-0131">Cell cycle</keyword>
<keyword id="KW-0132">Cell division</keyword>
<keyword id="KW-0159">Chromosome partition</keyword>
<keyword id="KW-0963">Cytoplasm</keyword>
<keyword id="KW-0229">DNA integration</keyword>
<keyword id="KW-0233">DNA recombination</keyword>
<keyword id="KW-0238">DNA-binding</keyword>
<accession>B8ZQ39</accession>